<feature type="chain" id="PRO_0000240438" description="Large ribosomal subunit protein eL22">
    <location>
        <begin position="1"/>
        <end position="128"/>
    </location>
</feature>
<feature type="modified residue" description="Phosphothreonine" evidence="2">
    <location>
        <position position="62"/>
    </location>
</feature>
<feature type="modified residue" description="Phosphoserine" evidence="1">
    <location>
        <position position="66"/>
    </location>
</feature>
<feature type="modified residue" description="N6-succinyllysine" evidence="2">
    <location>
        <position position="69"/>
    </location>
</feature>
<comment type="function">
    <text evidence="1">Component of the large ribosomal subunit. The ribosome is a large ribonucleoprotein complex responsible for the synthesis of proteins in the cell.</text>
</comment>
<comment type="subunit">
    <text evidence="1">Component of the large ribosomal subunit.</text>
</comment>
<comment type="subcellular location">
    <subcellularLocation>
        <location evidence="1">Cytoplasm</location>
    </subcellularLocation>
</comment>
<comment type="similarity">
    <text evidence="3">Belongs to the eukaryotic ribosomal protein eL22 family.</text>
</comment>
<protein>
    <recommendedName>
        <fullName evidence="3">Large ribosomal subunit protein eL22</fullName>
    </recommendedName>
    <alternativeName>
        <fullName>60S ribosomal protein L22</fullName>
    </alternativeName>
</protein>
<evidence type="ECO:0000250" key="1">
    <source>
        <dbReference type="UniProtKB" id="P35268"/>
    </source>
</evidence>
<evidence type="ECO:0000250" key="2">
    <source>
        <dbReference type="UniProtKB" id="P67984"/>
    </source>
</evidence>
<evidence type="ECO:0000305" key="3"/>
<organism>
    <name type="scientific">Macaca fascicularis</name>
    <name type="common">Crab-eating macaque</name>
    <name type="synonym">Cynomolgus monkey</name>
    <dbReference type="NCBI Taxonomy" id="9541"/>
    <lineage>
        <taxon>Eukaryota</taxon>
        <taxon>Metazoa</taxon>
        <taxon>Chordata</taxon>
        <taxon>Craniata</taxon>
        <taxon>Vertebrata</taxon>
        <taxon>Euteleostomi</taxon>
        <taxon>Mammalia</taxon>
        <taxon>Eutheria</taxon>
        <taxon>Euarchontoglires</taxon>
        <taxon>Primates</taxon>
        <taxon>Haplorrhini</taxon>
        <taxon>Catarrhini</taxon>
        <taxon>Cercopithecidae</taxon>
        <taxon>Cercopithecinae</taxon>
        <taxon>Macaca</taxon>
    </lineage>
</organism>
<accession>Q4R5I3</accession>
<proteinExistence type="evidence at protein level"/>
<reference key="1">
    <citation type="submission" date="2005-06" db="EMBL/GenBank/DDBJ databases">
        <title>DNA sequences of macaque genes expressed in brain or testis and its evolutionary implications.</title>
        <authorList>
            <consortium name="International consortium for macaque cDNA sequencing and analysis"/>
        </authorList>
    </citation>
    <scope>NUCLEOTIDE SEQUENCE [LARGE SCALE MRNA]</scope>
    <source>
        <tissue>Frontal cortex</tissue>
    </source>
</reference>
<gene>
    <name type="primary">RPL22</name>
    <name type="ORF">QflA-13079</name>
</gene>
<name>RL22_MACFA</name>
<sequence>MAPVKKLVAKGGKKKKQVLKFTLDCTHPVEDGIMDAANFEQFLQERIKVNGKAGNLGGGVVTIERSKSKITVTSEVPFSKRYLKYLTKKYLKKNNLRDWLRVVANSKESYELRYFQINQDEEEEEDED</sequence>
<dbReference type="EMBL" id="AB169560">
    <property type="protein sequence ID" value="BAE01642.1"/>
    <property type="molecule type" value="mRNA"/>
</dbReference>
<dbReference type="RefSeq" id="XP_045243879.1">
    <property type="nucleotide sequence ID" value="XM_045387944.1"/>
</dbReference>
<dbReference type="PDB" id="7NWI">
    <property type="method" value="EM"/>
    <property type="resolution" value="3.13 A"/>
    <property type="chains" value="U=1-128"/>
</dbReference>
<dbReference type="PDB" id="7ZJW">
    <property type="method" value="EM"/>
    <property type="resolution" value="2.80 A"/>
    <property type="chains" value="LX=1-128"/>
</dbReference>
<dbReference type="PDB" id="7ZJX">
    <property type="method" value="EM"/>
    <property type="resolution" value="3.10 A"/>
    <property type="chains" value="LX=1-128"/>
</dbReference>
<dbReference type="PDB" id="8RJD">
    <property type="method" value="EM"/>
    <property type="resolution" value="2.79 A"/>
    <property type="chains" value="U=1-128"/>
</dbReference>
<dbReference type="PDBsum" id="7NWI"/>
<dbReference type="PDBsum" id="7ZJW"/>
<dbReference type="PDBsum" id="7ZJX"/>
<dbReference type="PDBsum" id="8RJD"/>
<dbReference type="EMDB" id="EMD-12633"/>
<dbReference type="EMDB" id="EMD-14751"/>
<dbReference type="EMDB" id="EMD-14752"/>
<dbReference type="EMDB" id="EMD-19198"/>
<dbReference type="SMR" id="Q4R5I3"/>
<dbReference type="STRING" id="9541.ENSMFAP00000013191"/>
<dbReference type="Ensembl" id="ENSMFAT00000082924.1">
    <property type="protein sequence ID" value="ENSMFAP00000060884.1"/>
    <property type="gene ID" value="ENSMFAG00000051687.1"/>
</dbReference>
<dbReference type="GeneID" id="101865009"/>
<dbReference type="VEuPathDB" id="HostDB:ENSMFAG00000028034"/>
<dbReference type="eggNOG" id="KOG3434">
    <property type="taxonomic scope" value="Eukaryota"/>
</dbReference>
<dbReference type="GeneTree" id="ENSGT00940000153314"/>
<dbReference type="OMA" id="YQLRFYN"/>
<dbReference type="Proteomes" id="UP000233100">
    <property type="component" value="Chromosome 5"/>
</dbReference>
<dbReference type="GO" id="GO:0005737">
    <property type="term" value="C:cytoplasm"/>
    <property type="evidence" value="ECO:0007669"/>
    <property type="project" value="UniProtKB-SubCell"/>
</dbReference>
<dbReference type="GO" id="GO:1990904">
    <property type="term" value="C:ribonucleoprotein complex"/>
    <property type="evidence" value="ECO:0007669"/>
    <property type="project" value="UniProtKB-KW"/>
</dbReference>
<dbReference type="GO" id="GO:0005840">
    <property type="term" value="C:ribosome"/>
    <property type="evidence" value="ECO:0007669"/>
    <property type="project" value="UniProtKB-KW"/>
</dbReference>
<dbReference type="GO" id="GO:0008201">
    <property type="term" value="F:heparin binding"/>
    <property type="evidence" value="ECO:0007669"/>
    <property type="project" value="UniProtKB-KW"/>
</dbReference>
<dbReference type="GO" id="GO:0003723">
    <property type="term" value="F:RNA binding"/>
    <property type="evidence" value="ECO:0007669"/>
    <property type="project" value="UniProtKB-KW"/>
</dbReference>
<dbReference type="GO" id="GO:0003735">
    <property type="term" value="F:structural constituent of ribosome"/>
    <property type="evidence" value="ECO:0007669"/>
    <property type="project" value="InterPro"/>
</dbReference>
<dbReference type="GO" id="GO:0002181">
    <property type="term" value="P:cytoplasmic translation"/>
    <property type="evidence" value="ECO:0007669"/>
    <property type="project" value="TreeGrafter"/>
</dbReference>
<dbReference type="FunFam" id="3.30.1360.210:FF:000001">
    <property type="entry name" value="60S ribosomal protein L22 1"/>
    <property type="match status" value="1"/>
</dbReference>
<dbReference type="Gene3D" id="3.30.1360.210">
    <property type="match status" value="1"/>
</dbReference>
<dbReference type="InterPro" id="IPR002671">
    <property type="entry name" value="Ribosomal_eL22"/>
</dbReference>
<dbReference type="InterPro" id="IPR038526">
    <property type="entry name" value="Ribosomal_eL22_sf"/>
</dbReference>
<dbReference type="PANTHER" id="PTHR10064">
    <property type="entry name" value="60S RIBOSOMAL PROTEIN L22"/>
    <property type="match status" value="1"/>
</dbReference>
<dbReference type="PANTHER" id="PTHR10064:SF2">
    <property type="entry name" value="LARGE RIBOSOMAL SUBUNIT PROTEIN EL22"/>
    <property type="match status" value="1"/>
</dbReference>
<dbReference type="Pfam" id="PF01776">
    <property type="entry name" value="Ribosomal_L22e"/>
    <property type="match status" value="1"/>
</dbReference>
<keyword id="KW-0002">3D-structure</keyword>
<keyword id="KW-0963">Cytoplasm</keyword>
<keyword id="KW-0358">Heparin-binding</keyword>
<keyword id="KW-0597">Phosphoprotein</keyword>
<keyword id="KW-1185">Reference proteome</keyword>
<keyword id="KW-0687">Ribonucleoprotein</keyword>
<keyword id="KW-0689">Ribosomal protein</keyword>
<keyword id="KW-0694">RNA-binding</keyword>